<dbReference type="EMBL" id="AM286415">
    <property type="protein sequence ID" value="CAL12288.1"/>
    <property type="molecule type" value="Genomic_DNA"/>
</dbReference>
<dbReference type="RefSeq" id="WP_005164183.1">
    <property type="nucleotide sequence ID" value="NC_008800.1"/>
</dbReference>
<dbReference type="RefSeq" id="YP_001006458.1">
    <property type="nucleotide sequence ID" value="NC_008800.1"/>
</dbReference>
<dbReference type="KEGG" id="yen:YE2220"/>
<dbReference type="PATRIC" id="fig|393305.7.peg.2385"/>
<dbReference type="eggNOG" id="COG2917">
    <property type="taxonomic scope" value="Bacteria"/>
</dbReference>
<dbReference type="HOGENOM" id="CLU_089554_2_0_6"/>
<dbReference type="OrthoDB" id="9788219at2"/>
<dbReference type="Proteomes" id="UP000000642">
    <property type="component" value="Chromosome"/>
</dbReference>
<dbReference type="GO" id="GO:0005886">
    <property type="term" value="C:plasma membrane"/>
    <property type="evidence" value="ECO:0007669"/>
    <property type="project" value="UniProtKB-SubCell"/>
</dbReference>
<dbReference type="HAMAP" id="MF_00189">
    <property type="entry name" value="YciB"/>
    <property type="match status" value="1"/>
</dbReference>
<dbReference type="InterPro" id="IPR006008">
    <property type="entry name" value="YciB"/>
</dbReference>
<dbReference type="NCBIfam" id="TIGR00997">
    <property type="entry name" value="ispZ"/>
    <property type="match status" value="1"/>
</dbReference>
<dbReference type="NCBIfam" id="NF001324">
    <property type="entry name" value="PRK00259.1-2"/>
    <property type="match status" value="1"/>
</dbReference>
<dbReference type="NCBIfam" id="NF001325">
    <property type="entry name" value="PRK00259.1-3"/>
    <property type="match status" value="1"/>
</dbReference>
<dbReference type="NCBIfam" id="NF001326">
    <property type="entry name" value="PRK00259.1-4"/>
    <property type="match status" value="1"/>
</dbReference>
<dbReference type="PANTHER" id="PTHR36917:SF1">
    <property type="entry name" value="INNER MEMBRANE-SPANNING PROTEIN YCIB"/>
    <property type="match status" value="1"/>
</dbReference>
<dbReference type="PANTHER" id="PTHR36917">
    <property type="entry name" value="INTRACELLULAR SEPTATION PROTEIN A-RELATED"/>
    <property type="match status" value="1"/>
</dbReference>
<dbReference type="Pfam" id="PF04279">
    <property type="entry name" value="IspA"/>
    <property type="match status" value="1"/>
</dbReference>
<sequence>MKQLLDFLPLVVFFVFYKMYDIFVASGALIVATLLALAFTWFKYRKVEKMTLVTAIMVLVFGTLTLAFHSDLFIKWKVTVLYVLFAVALLVSQWFMKKPLIQRMLGKELTLPDTVWSTLNMSWAVFFLVCGLLNIYVAFWLPQDIWVNFKVFGLTALTLVFTLISGVYIYRHMPEEQKKS</sequence>
<protein>
    <recommendedName>
        <fullName evidence="1">Inner membrane-spanning protein YciB</fullName>
    </recommendedName>
</protein>
<gene>
    <name evidence="1" type="primary">yciB</name>
    <name type="ordered locus">YE2220</name>
</gene>
<accession>A1JQ17</accession>
<proteinExistence type="inferred from homology"/>
<organism>
    <name type="scientific">Yersinia enterocolitica serotype O:8 / biotype 1B (strain NCTC 13174 / 8081)</name>
    <dbReference type="NCBI Taxonomy" id="393305"/>
    <lineage>
        <taxon>Bacteria</taxon>
        <taxon>Pseudomonadati</taxon>
        <taxon>Pseudomonadota</taxon>
        <taxon>Gammaproteobacteria</taxon>
        <taxon>Enterobacterales</taxon>
        <taxon>Yersiniaceae</taxon>
        <taxon>Yersinia</taxon>
    </lineage>
</organism>
<comment type="function">
    <text evidence="1">Plays a role in cell envelope biogenesis, maintenance of cell envelope integrity and membrane homeostasis.</text>
</comment>
<comment type="subcellular location">
    <subcellularLocation>
        <location evidence="1">Cell inner membrane</location>
        <topology evidence="1">Multi-pass membrane protein</topology>
    </subcellularLocation>
</comment>
<comment type="similarity">
    <text evidence="1">Belongs to the YciB family.</text>
</comment>
<evidence type="ECO:0000255" key="1">
    <source>
        <dbReference type="HAMAP-Rule" id="MF_00189"/>
    </source>
</evidence>
<reference key="1">
    <citation type="journal article" date="2006" name="PLoS Genet.">
        <title>The complete genome sequence and comparative genome analysis of the high pathogenicity Yersinia enterocolitica strain 8081.</title>
        <authorList>
            <person name="Thomson N.R."/>
            <person name="Howard S."/>
            <person name="Wren B.W."/>
            <person name="Holden M.T.G."/>
            <person name="Crossman L."/>
            <person name="Challis G.L."/>
            <person name="Churcher C."/>
            <person name="Mungall K."/>
            <person name="Brooks K."/>
            <person name="Chillingworth T."/>
            <person name="Feltwell T."/>
            <person name="Abdellah Z."/>
            <person name="Hauser H."/>
            <person name="Jagels K."/>
            <person name="Maddison M."/>
            <person name="Moule S."/>
            <person name="Sanders M."/>
            <person name="Whitehead S."/>
            <person name="Quail M.A."/>
            <person name="Dougan G."/>
            <person name="Parkhill J."/>
            <person name="Prentice M.B."/>
        </authorList>
    </citation>
    <scope>NUCLEOTIDE SEQUENCE [LARGE SCALE GENOMIC DNA]</scope>
    <source>
        <strain>NCTC 13174 / 8081</strain>
    </source>
</reference>
<name>YCIB_YERE8</name>
<feature type="chain" id="PRO_1000021074" description="Inner membrane-spanning protein YciB">
    <location>
        <begin position="1"/>
        <end position="180"/>
    </location>
</feature>
<feature type="transmembrane region" description="Helical" evidence="1">
    <location>
        <begin position="22"/>
        <end position="42"/>
    </location>
</feature>
<feature type="transmembrane region" description="Helical" evidence="1">
    <location>
        <begin position="50"/>
        <end position="70"/>
    </location>
</feature>
<feature type="transmembrane region" description="Helical" evidence="1">
    <location>
        <begin position="72"/>
        <end position="92"/>
    </location>
</feature>
<feature type="transmembrane region" description="Helical" evidence="1">
    <location>
        <begin position="121"/>
        <end position="141"/>
    </location>
</feature>
<feature type="transmembrane region" description="Helical" evidence="1">
    <location>
        <begin position="149"/>
        <end position="169"/>
    </location>
</feature>
<keyword id="KW-0997">Cell inner membrane</keyword>
<keyword id="KW-1003">Cell membrane</keyword>
<keyword id="KW-0472">Membrane</keyword>
<keyword id="KW-0812">Transmembrane</keyword>
<keyword id="KW-1133">Transmembrane helix</keyword>